<comment type="function">
    <text evidence="2 3 4 5 6 7 8 9">In complex with CCZ1, is required for multiple vacuole delivery pathways including the cytoplasm to vacuole transport (Cvt), autophagy, pexophagy and endocytosis. The MON1-CCZ1 complex acts at the fusion of vesicles with the vacuole, through its regulation of the SNARE complex during the coordinated priming and docking stages of fusion, and particularly at the stage of tethering/docking (PubMed:12134085, PubMed:12364329, PubMed:12387888, PubMed:14662743, PubMed:15721293, PubMed:32391792, PubMed:37463208). The MON1-CCZ1 complex is recruited to membranes enriched in charged lipids, particularly phosphatidylinositol 3-phosphate (PtdIns[3]P), by GTP-associated small GTPase RAB5 homologs (YPT10, YPT52, YPT53 and VPS21) (PubMed:32391792). The MON1-CCZ1 complex recruits GDP-associated small GTPase YPT7 to membranes and acts as a guanine nucleotide-exchange factor (GEF), promoting nucleotide-exchange on YPT7 and triggering endosomal maturation by recruiting downstream effectors such as components of the HOPS tethering complex (PubMed:20797862, PubMed:32391792).</text>
</comment>
<comment type="activity regulation">
    <text evidence="8 9">The YPT7 guanine nucleotide-exchange factor (GEF) activity of the MON1-CCZ1 complex is autoinhibited by the N-terminal disordered region of MON1 (PubMed:37463208). Inhibited by phosphorylation by YCK3 (PubMed:32391792).</text>
</comment>
<comment type="subunit">
    <text evidence="3 9">Component of the MON1-CCZ1 guanyl-nucleotide exchange factor complex made up of MON1 and CCZ1 (PubMed:12364329). Interacts with YPT10; this interaction has a strong preference for the GTP-associated form of YPT10 (PubMed:37463208).</text>
</comment>
<comment type="interaction">
    <interactant intactId="EBI-23945">
        <id>P53129</id>
    </interactant>
    <interactant intactId="EBI-21608">
        <id>P38273</id>
        <label>CCZ1</label>
    </interactant>
    <organismsDiffer>false</organismsDiffer>
    <experiments>5</experiments>
</comment>
<comment type="subcellular location">
    <subcellularLocation>
        <location evidence="11">Endosome</location>
        <location evidence="11">Multivesicular body membrane</location>
        <topology>Peripheral membrane protein</topology>
    </subcellularLocation>
    <subcellularLocation>
        <location evidence="3">Prevacuolar compartment membrane</location>
        <topology>Peripheral membrane protein</topology>
    </subcellularLocation>
    <subcellularLocation>
        <location evidence="3 5">Vacuole membrane</location>
        <topology>Peripheral membrane protein</topology>
    </subcellularLocation>
    <text evidence="5">The association of the MON1-CCZ1 complex with the vacuole is regulated by the C-Vps/HOPS complex.</text>
</comment>
<comment type="domain">
    <text evidence="9">The disordered N-terminal is involved in autoinhibition of the MON1-CCZ1 complex guanyl-nucleotide exchange factor activity.</text>
</comment>
<comment type="PTM">
    <text evidence="8">Phosphorylated by YCK3; this modification inhibits the YPT7 guanine nucleotide-exchange activity of the MON1-CCZ1 complex, possibly by preventing recruitment by RAB5 homologs.</text>
</comment>
<comment type="disruption phenotype">
    <text evidence="8">Altered fragmented vacuolar morphology.</text>
</comment>
<comment type="similarity">
    <text evidence="10">Belongs to the MON1/SAND family.</text>
</comment>
<accession>P53129</accession>
<accession>D6VU24</accession>
<sequence>MNLNESYLDAEIPKGQLKHSKSGNFEGIPIVATTSEPTTSVNLDETFFKKAPIAMPICDDHSVSKSTSVNSLNTTSLASRRSPLQTKKLQAKNNLLSADLAKSNDDTTRALNSPKKDFGPYLDSENDIRSRLAESIYSMETSIRGSELQRRPYVSNEIPNVFKFSKFNSNCKLNESQTLCDKNFFIFTSAGKPIYCMHGKDEQIMSYTGLVNTVISYFQVNGPSELKTISTLTSGKRLTFLDKSPILLMAQSERGESSNELLNQLDFLYSYILSSLSERQLLRLFSKRENFDLRNYLESTDFENLDEICSLICNRMFPDLLLNSLQCLPFNHSSRLKLQNVVLQQLEKRQDIPRGTLLYGLIIAPQNKLCCVLRPRGHTLHTTDLHLLFCLISHQFQNLDETQELWVPICFPKFNSSGFLYCYIKFLPNDTHSNEKSALVLISAQKDAFFSLKSFSDELIIKLEEEKLLKKINTSKGFKLSDIPAPMVHHFIYKSKQNVQYVMPHFEVNSNIALDSSQGLEYELKLKTYYQQLHGTVVRDNGNLLSRSMLNFVRWSSKDNEDLAMDETQMDFSELDEYIIGNSSFKQESVNMVGMAWVTPTFELYLIGNNGIVDKRVLFKSARKVANWCQKHESRLFISDGAVF</sequence>
<gene>
    <name type="primary">MON1</name>
    <name type="synonym">AUT12</name>
    <name type="ordered locus">YGL124C</name>
    <name type="ORF">G2889</name>
</gene>
<evidence type="ECO:0000256" key="1">
    <source>
        <dbReference type="SAM" id="MobiDB-lite"/>
    </source>
</evidence>
<evidence type="ECO:0000269" key="2">
    <source>
    </source>
</evidence>
<evidence type="ECO:0000269" key="3">
    <source>
    </source>
</evidence>
<evidence type="ECO:0000269" key="4">
    <source>
    </source>
</evidence>
<evidence type="ECO:0000269" key="5">
    <source>
    </source>
</evidence>
<evidence type="ECO:0000269" key="6">
    <source>
    </source>
</evidence>
<evidence type="ECO:0000269" key="7">
    <source>
    </source>
</evidence>
<evidence type="ECO:0000269" key="8">
    <source>
    </source>
</evidence>
<evidence type="ECO:0000269" key="9">
    <source>
    </source>
</evidence>
<evidence type="ECO:0000305" key="10"/>
<evidence type="ECO:0000305" key="11">
    <source>
    </source>
</evidence>
<evidence type="ECO:0007744" key="12">
    <source>
    </source>
</evidence>
<evidence type="ECO:0007744" key="13">
    <source>
    </source>
</evidence>
<dbReference type="EMBL" id="X94106">
    <property type="protein sequence ID" value="CAA63834.1"/>
    <property type="molecule type" value="Genomic_DNA"/>
</dbReference>
<dbReference type="EMBL" id="Z72646">
    <property type="protein sequence ID" value="CAA96832.1"/>
    <property type="molecule type" value="Genomic_DNA"/>
</dbReference>
<dbReference type="EMBL" id="BK006941">
    <property type="protein sequence ID" value="DAA07985.2"/>
    <property type="molecule type" value="Genomic_DNA"/>
</dbReference>
<dbReference type="PIR" id="S64135">
    <property type="entry name" value="S64135"/>
</dbReference>
<dbReference type="RefSeq" id="NP_011391.2">
    <property type="nucleotide sequence ID" value="NM_001180989.2"/>
</dbReference>
<dbReference type="SMR" id="P53129"/>
<dbReference type="BioGRID" id="33127">
    <property type="interactions" value="440"/>
</dbReference>
<dbReference type="ComplexPortal" id="CPX-1674">
    <property type="entry name" value="MON1-CCZ1 guanyl-nucleotide exchange factor complex"/>
</dbReference>
<dbReference type="DIP" id="DIP-5483N"/>
<dbReference type="FunCoup" id="P53129">
    <property type="interactions" value="647"/>
</dbReference>
<dbReference type="IntAct" id="P53129">
    <property type="interactions" value="4"/>
</dbReference>
<dbReference type="MINT" id="P53129"/>
<dbReference type="STRING" id="4932.YGL124C"/>
<dbReference type="iPTMnet" id="P53129"/>
<dbReference type="PaxDb" id="4932-YGL124C"/>
<dbReference type="PeptideAtlas" id="P53129"/>
<dbReference type="EnsemblFungi" id="YGL124C_mRNA">
    <property type="protein sequence ID" value="YGL124C"/>
    <property type="gene ID" value="YGL124C"/>
</dbReference>
<dbReference type="GeneID" id="852753"/>
<dbReference type="KEGG" id="sce:YGL124C"/>
<dbReference type="AGR" id="SGD:S000003092"/>
<dbReference type="SGD" id="S000003092">
    <property type="gene designation" value="MON1"/>
</dbReference>
<dbReference type="VEuPathDB" id="FungiDB:YGL124C"/>
<dbReference type="eggNOG" id="KOG0997">
    <property type="taxonomic scope" value="Eukaryota"/>
</dbReference>
<dbReference type="GeneTree" id="ENSGT00390000006665"/>
<dbReference type="HOGENOM" id="CLU_014574_0_0_1"/>
<dbReference type="InParanoid" id="P53129"/>
<dbReference type="OMA" id="QQPFNAK"/>
<dbReference type="OrthoDB" id="272411at2759"/>
<dbReference type="BioCyc" id="YEAST:G3O-30621-MONOMER"/>
<dbReference type="Reactome" id="R-SCE-8876198">
    <property type="pathway name" value="RAB GEFs exchange GTP for GDP on RABs"/>
</dbReference>
<dbReference type="BioGRID-ORCS" id="852753">
    <property type="hits" value="0 hits in 10 CRISPR screens"/>
</dbReference>
<dbReference type="PRO" id="PR:P53129"/>
<dbReference type="Proteomes" id="UP000002311">
    <property type="component" value="Chromosome VII"/>
</dbReference>
<dbReference type="RNAct" id="P53129">
    <property type="molecule type" value="protein"/>
</dbReference>
<dbReference type="GO" id="GO:0005829">
    <property type="term" value="C:cytosol"/>
    <property type="evidence" value="ECO:0000314"/>
    <property type="project" value="SGD"/>
</dbReference>
<dbReference type="GO" id="GO:0005768">
    <property type="term" value="C:endosome"/>
    <property type="evidence" value="ECO:0000314"/>
    <property type="project" value="SGD"/>
</dbReference>
<dbReference type="GO" id="GO:0000329">
    <property type="term" value="C:fungal-type vacuole membrane"/>
    <property type="evidence" value="ECO:0000314"/>
    <property type="project" value="SGD"/>
</dbReference>
<dbReference type="GO" id="GO:0035658">
    <property type="term" value="C:Mon1-Ccz1 complex"/>
    <property type="evidence" value="ECO:0000314"/>
    <property type="project" value="SGD"/>
</dbReference>
<dbReference type="GO" id="GO:0032585">
    <property type="term" value="C:multivesicular body membrane"/>
    <property type="evidence" value="ECO:0007669"/>
    <property type="project" value="UniProtKB-SubCell"/>
</dbReference>
<dbReference type="GO" id="GO:1990624">
    <property type="term" value="F:guanyl nucleotide exchange factor inhibitor activity"/>
    <property type="evidence" value="ECO:0000314"/>
    <property type="project" value="UniProtKB"/>
</dbReference>
<dbReference type="GO" id="GO:0032266">
    <property type="term" value="F:phosphatidylinositol-3-phosphate binding"/>
    <property type="evidence" value="ECO:0000314"/>
    <property type="project" value="SGD"/>
</dbReference>
<dbReference type="GO" id="GO:0010314">
    <property type="term" value="F:phosphatidylinositol-5-phosphate binding"/>
    <property type="evidence" value="ECO:0000314"/>
    <property type="project" value="SGD"/>
</dbReference>
<dbReference type="GO" id="GO:0001786">
    <property type="term" value="F:phosphatidylserine binding"/>
    <property type="evidence" value="ECO:0000314"/>
    <property type="project" value="SGD"/>
</dbReference>
<dbReference type="GO" id="GO:0097352">
    <property type="term" value="P:autophagosome maturation"/>
    <property type="evidence" value="ECO:0000303"/>
    <property type="project" value="ComplexPortal"/>
</dbReference>
<dbReference type="GO" id="GO:0006914">
    <property type="term" value="P:autophagy"/>
    <property type="evidence" value="ECO:0000315"/>
    <property type="project" value="SGD"/>
</dbReference>
<dbReference type="GO" id="GO:0032258">
    <property type="term" value="P:cytoplasm to vacuole targeting by the Cvt pathway"/>
    <property type="evidence" value="ECO:0000315"/>
    <property type="project" value="SGD"/>
</dbReference>
<dbReference type="GO" id="GO:0032511">
    <property type="term" value="P:late endosome to vacuole transport via multivesicular body sorting pathway"/>
    <property type="evidence" value="ECO:0000315"/>
    <property type="project" value="ComplexPortal"/>
</dbReference>
<dbReference type="GO" id="GO:0016236">
    <property type="term" value="P:macroautophagy"/>
    <property type="evidence" value="ECO:0000315"/>
    <property type="project" value="SGD"/>
</dbReference>
<dbReference type="GO" id="GO:0044395">
    <property type="term" value="P:protein targeting to vacuolar membrane"/>
    <property type="evidence" value="ECO:0000315"/>
    <property type="project" value="SGD"/>
</dbReference>
<dbReference type="GO" id="GO:0006623">
    <property type="term" value="P:protein targeting to vacuole"/>
    <property type="evidence" value="ECO:0007001"/>
    <property type="project" value="SGD"/>
</dbReference>
<dbReference type="GO" id="GO:0048278">
    <property type="term" value="P:vesicle docking"/>
    <property type="evidence" value="ECO:0000315"/>
    <property type="project" value="SGD"/>
</dbReference>
<dbReference type="InterPro" id="IPR043972">
    <property type="entry name" value="FUZ/MON1/HPS1_longin_1"/>
</dbReference>
<dbReference type="InterPro" id="IPR043971">
    <property type="entry name" value="FUZ/MON1/HPS1_longin_2"/>
</dbReference>
<dbReference type="InterPro" id="IPR043970">
    <property type="entry name" value="FUZ/MON1/HPS1_longin_3"/>
</dbReference>
<dbReference type="InterPro" id="IPR004353">
    <property type="entry name" value="Mon1"/>
</dbReference>
<dbReference type="PANTHER" id="PTHR13027">
    <property type="entry name" value="SAND PROTEIN-RELATED"/>
    <property type="match status" value="1"/>
</dbReference>
<dbReference type="PANTHER" id="PTHR13027:SF7">
    <property type="entry name" value="VACUOLAR FUSION PROTEIN MON1 HOMOLOG"/>
    <property type="match status" value="1"/>
</dbReference>
<dbReference type="Pfam" id="PF19036">
    <property type="entry name" value="Fuz_longin_1"/>
    <property type="match status" value="1"/>
</dbReference>
<dbReference type="Pfam" id="PF19037">
    <property type="entry name" value="Fuz_longin_2"/>
    <property type="match status" value="1"/>
</dbReference>
<dbReference type="Pfam" id="PF19038">
    <property type="entry name" value="Fuz_longin_3"/>
    <property type="match status" value="1"/>
</dbReference>
<dbReference type="PRINTS" id="PR01546">
    <property type="entry name" value="YEAST73DUF"/>
</dbReference>
<keyword id="KW-0072">Autophagy</keyword>
<keyword id="KW-0967">Endosome</keyword>
<keyword id="KW-0472">Membrane</keyword>
<keyword id="KW-0597">Phosphoprotein</keyword>
<keyword id="KW-0653">Protein transport</keyword>
<keyword id="KW-1185">Reference proteome</keyword>
<keyword id="KW-0813">Transport</keyword>
<keyword id="KW-0926">Vacuole</keyword>
<name>MON1_YEAST</name>
<proteinExistence type="evidence at protein level"/>
<protein>
    <recommendedName>
        <fullName>Vacuolar fusion protein MON1</fullName>
    </recommendedName>
    <alternativeName>
        <fullName>Autophagy-related protein 12</fullName>
    </alternativeName>
    <alternativeName>
        <fullName>Monensin sensitivity protein 1</fullName>
    </alternativeName>
</protein>
<feature type="chain" id="PRO_0000202744" description="Vacuolar fusion protein MON1">
    <location>
        <begin position="1"/>
        <end position="644"/>
    </location>
</feature>
<feature type="region of interest" description="Disordered" evidence="1">
    <location>
        <begin position="64"/>
        <end position="85"/>
    </location>
</feature>
<feature type="compositionally biased region" description="Low complexity" evidence="1">
    <location>
        <begin position="64"/>
        <end position="79"/>
    </location>
</feature>
<feature type="modified residue" description="Phosphoserine" evidence="13">
    <location>
        <position position="22"/>
    </location>
</feature>
<feature type="modified residue" description="Phosphoserine" evidence="12 13">
    <location>
        <position position="71"/>
    </location>
</feature>
<feature type="mutagenesis site" description="Increased Rab5-dependent GEF activity, possibly due to loss of autoinhibition." evidence="9">
    <original>LL</original>
    <variation>AA</variation>
    <location>
        <begin position="95"/>
        <end position="96"/>
    </location>
</feature>
<feature type="mutagenesis site" description="Disruption of YPT10 binding resulting in reduced Rab5 homolog-dependent GEF activity toward YPT7 on membranes but not in solution." evidence="9">
    <original>W</original>
    <variation>A</variation>
    <location>
        <position position="406"/>
    </location>
</feature>
<feature type="mutagenesis site" description="Cellular growth deficiency, possibly due to disruption of MON1-CCZ1 complex recruitment by RAB5 proteins." evidence="9">
    <original>W</original>
    <variation>K</variation>
    <location>
        <position position="406"/>
    </location>
</feature>
<feature type="sequence conflict" description="In Ref. 1; CAA63834 and 2; CAA96832." evidence="10" ref="1 2">
    <original>S</original>
    <variation>C</variation>
    <location>
        <position position="113"/>
    </location>
</feature>
<reference key="1">
    <citation type="journal article" date="1996" name="Yeast">
        <title>Identification of a putative methylenetetrahydrofolate reductase by sequence analysis of a 6.8 kb DNA fragment of yeast chromosome VII.</title>
        <authorList>
            <person name="Tizon B."/>
            <person name="Rodriguez-Torres A.M."/>
            <person name="Rodriguez-Belmonte E."/>
            <person name="Cadahia J.L."/>
            <person name="Cerdan E."/>
        </authorList>
    </citation>
    <scope>NUCLEOTIDE SEQUENCE [GENOMIC DNA]</scope>
</reference>
<reference key="2">
    <citation type="journal article" date="1997" name="Nature">
        <title>The nucleotide sequence of Saccharomyces cerevisiae chromosome VII.</title>
        <authorList>
            <person name="Tettelin H."/>
            <person name="Agostoni-Carbone M.L."/>
            <person name="Albermann K."/>
            <person name="Albers M."/>
            <person name="Arroyo J."/>
            <person name="Backes U."/>
            <person name="Barreiros T."/>
            <person name="Bertani I."/>
            <person name="Bjourson A.J."/>
            <person name="Brueckner M."/>
            <person name="Bruschi C.V."/>
            <person name="Carignani G."/>
            <person name="Castagnoli L."/>
            <person name="Cerdan E."/>
            <person name="Clemente M.L."/>
            <person name="Coblenz A."/>
            <person name="Coglievina M."/>
            <person name="Coissac E."/>
            <person name="Defoor E."/>
            <person name="Del Bino S."/>
            <person name="Delius H."/>
            <person name="Delneri D."/>
            <person name="de Wergifosse P."/>
            <person name="Dujon B."/>
            <person name="Durand P."/>
            <person name="Entian K.-D."/>
            <person name="Eraso P."/>
            <person name="Escribano V."/>
            <person name="Fabiani L."/>
            <person name="Fartmann B."/>
            <person name="Feroli F."/>
            <person name="Feuermann M."/>
            <person name="Frontali L."/>
            <person name="Garcia-Gonzalez M."/>
            <person name="Garcia-Saez M.I."/>
            <person name="Goffeau A."/>
            <person name="Guerreiro P."/>
            <person name="Hani J."/>
            <person name="Hansen M."/>
            <person name="Hebling U."/>
            <person name="Hernandez K."/>
            <person name="Heumann K."/>
            <person name="Hilger F."/>
            <person name="Hofmann B."/>
            <person name="Indge K.J."/>
            <person name="James C.M."/>
            <person name="Klima R."/>
            <person name="Koetter P."/>
            <person name="Kramer B."/>
            <person name="Kramer W."/>
            <person name="Lauquin G."/>
            <person name="Leuther H."/>
            <person name="Louis E.J."/>
            <person name="Maillier E."/>
            <person name="Marconi A."/>
            <person name="Martegani E."/>
            <person name="Mazon M.J."/>
            <person name="Mazzoni C."/>
            <person name="McReynolds A.D.K."/>
            <person name="Melchioretto P."/>
            <person name="Mewes H.-W."/>
            <person name="Minenkova O."/>
            <person name="Mueller-Auer S."/>
            <person name="Nawrocki A."/>
            <person name="Netter P."/>
            <person name="Neu R."/>
            <person name="Nombela C."/>
            <person name="Oliver S.G."/>
            <person name="Panzeri L."/>
            <person name="Paoluzi S."/>
            <person name="Plevani P."/>
            <person name="Portetelle D."/>
            <person name="Portillo F."/>
            <person name="Potier S."/>
            <person name="Purnelle B."/>
            <person name="Rieger M."/>
            <person name="Riles L."/>
            <person name="Rinaldi T."/>
            <person name="Robben J."/>
            <person name="Rodrigues-Pousada C."/>
            <person name="Rodriguez-Belmonte E."/>
            <person name="Rodriguez-Torres A.M."/>
            <person name="Rose M."/>
            <person name="Ruzzi M."/>
            <person name="Saliola M."/>
            <person name="Sanchez-Perez M."/>
            <person name="Schaefer B."/>
            <person name="Schaefer M."/>
            <person name="Scharfe M."/>
            <person name="Schmidheini T."/>
            <person name="Schreer A."/>
            <person name="Skala J."/>
            <person name="Souciet J.-L."/>
            <person name="Steensma H.Y."/>
            <person name="Talla E."/>
            <person name="Thierry A."/>
            <person name="Vandenbol M."/>
            <person name="van der Aart Q.J.M."/>
            <person name="Van Dyck L."/>
            <person name="Vanoni M."/>
            <person name="Verhasselt P."/>
            <person name="Voet M."/>
            <person name="Volckaert G."/>
            <person name="Wambutt R."/>
            <person name="Watson M.D."/>
            <person name="Weber N."/>
            <person name="Wedler E."/>
            <person name="Wedler H."/>
            <person name="Wipfli P."/>
            <person name="Wolf K."/>
            <person name="Wright L.F."/>
            <person name="Zaccaria P."/>
            <person name="Zimmermann M."/>
            <person name="Zollner A."/>
            <person name="Kleine K."/>
        </authorList>
    </citation>
    <scope>NUCLEOTIDE SEQUENCE [LARGE SCALE GENOMIC DNA]</scope>
    <source>
        <strain>ATCC 204508 / S288c</strain>
    </source>
</reference>
<reference key="3">
    <citation type="journal article" date="2014" name="G3 (Bethesda)">
        <title>The reference genome sequence of Saccharomyces cerevisiae: Then and now.</title>
        <authorList>
            <person name="Engel S.R."/>
            <person name="Dietrich F.S."/>
            <person name="Fisk D.G."/>
            <person name="Binkley G."/>
            <person name="Balakrishnan R."/>
            <person name="Costanzo M.C."/>
            <person name="Dwight S.S."/>
            <person name="Hitz B.C."/>
            <person name="Karra K."/>
            <person name="Nash R.S."/>
            <person name="Weng S."/>
            <person name="Wong E.D."/>
            <person name="Lloyd P."/>
            <person name="Skrzypek M.S."/>
            <person name="Miyasato S.R."/>
            <person name="Simison M."/>
            <person name="Cherry J.M."/>
        </authorList>
    </citation>
    <scope>GENOME REANNOTATION</scope>
    <scope>SEQUENCE REVISION TO 113</scope>
    <source>
        <strain>ATCC 204508 / S288c</strain>
    </source>
</reference>
<reference key="4">
    <citation type="journal article" date="2002" name="FEBS Lett.">
        <title>Yeast Mon1p/Aut12p functions in vacuolar fusion of autophagosomes and cvt-vesicles.</title>
        <authorList>
            <person name="Meiling-Wesse K."/>
            <person name="Barth H."/>
            <person name="Voss C."/>
            <person name="Barmark G."/>
            <person name="Muren E."/>
            <person name="Ronne H."/>
            <person name="Thumm M."/>
        </authorList>
    </citation>
    <scope>FUNCTION</scope>
    <scope>SUBCELLULAR LOCATION</scope>
</reference>
<reference key="5">
    <citation type="journal article" date="2002" name="J. Biol. Chem.">
        <title>The Ccz1-Mon1 protein complex is required for the late step of multiple vacuole delivery pathways.</title>
        <authorList>
            <person name="Wang C.-W."/>
            <person name="Stromhaug P.E."/>
            <person name="Shima J."/>
            <person name="Klionsky D.J."/>
        </authorList>
    </citation>
    <scope>FUNCTION</scope>
    <scope>SUBCELLULAR LOCATION</scope>
    <scope>INTERACTION WITH CCZ1</scope>
</reference>
<reference key="6">
    <citation type="journal article" date="2002" name="Mol. Biol. Cell">
        <title>Genomic screen for vacuolar protein sorting genes in Saccharomyces cerevisiae.</title>
        <authorList>
            <person name="Bonangelino C.J."/>
            <person name="Chavez E.M."/>
            <person name="Bonifacino J.S."/>
        </authorList>
    </citation>
    <scope>FUNCTION</scope>
</reference>
<reference key="7">
    <citation type="journal article" date="2003" name="J. Cell Biol.">
        <title>Yeast homotypic vacuole fusion requires the Ccz1-Mon1 complex during the tethering/docking stage.</title>
        <authorList>
            <person name="Wang C.-W."/>
            <person name="Stromhaug P.E."/>
            <person name="Kauffman E.J."/>
            <person name="Weisman L.S."/>
            <person name="Klionsky D.J."/>
        </authorList>
    </citation>
    <scope>FUNCTION OF THE CCZ1-MON1 COMPLEX</scope>
    <scope>SUBCELLULAR LOCATION</scope>
</reference>
<reference key="8">
    <citation type="journal article" date="2003" name="Nature">
        <title>Global analysis of protein localization in budding yeast.</title>
        <authorList>
            <person name="Huh W.-K."/>
            <person name="Falvo J.V."/>
            <person name="Gerke L.C."/>
            <person name="Carroll A.S."/>
            <person name="Howson R.W."/>
            <person name="Weissman J.S."/>
            <person name="O'Shea E.K."/>
        </authorList>
    </citation>
    <scope>SUBCELLULAR LOCATION [LARGE SCALE ANALYSIS]</scope>
</reference>
<reference key="9">
    <citation type="journal article" date="2005" name="Biochem. Biophys. Res. Commun.">
        <title>Multiple functions of the vacuolar sorting protein Ccz1p in Saccharomyces cerevisiae.</title>
        <authorList>
            <person name="Hoffman-Sommer M."/>
            <person name="Migdalski A."/>
            <person name="Rytka J."/>
            <person name="Kucharczyk R."/>
        </authorList>
    </citation>
    <scope>FUNCTION</scope>
</reference>
<reference key="10">
    <citation type="journal article" date="2008" name="Mol. Cell. Proteomics">
        <title>A multidimensional chromatography technology for in-depth phosphoproteome analysis.</title>
        <authorList>
            <person name="Albuquerque C.P."/>
            <person name="Smolka M.B."/>
            <person name="Payne S.H."/>
            <person name="Bafna V."/>
            <person name="Eng J."/>
            <person name="Zhou H."/>
        </authorList>
    </citation>
    <scope>PHOSPHORYLATION [LARGE SCALE ANALYSIS] AT SER-71</scope>
    <scope>IDENTIFICATION BY MASS SPECTROMETRY [LARGE SCALE ANALYSIS]</scope>
</reference>
<reference key="11">
    <citation type="journal article" date="2009" name="Science">
        <title>Global analysis of Cdk1 substrate phosphorylation sites provides insights into evolution.</title>
        <authorList>
            <person name="Holt L.J."/>
            <person name="Tuch B.B."/>
            <person name="Villen J."/>
            <person name="Johnson A.D."/>
            <person name="Gygi S.P."/>
            <person name="Morgan D.O."/>
        </authorList>
    </citation>
    <scope>PHOSPHORYLATION [LARGE SCALE ANALYSIS] AT SER-22 AND SER-71</scope>
    <scope>IDENTIFICATION BY MASS SPECTROMETRY [LARGE SCALE ANALYSIS]</scope>
</reference>
<reference key="12">
    <citation type="journal article" date="2010" name="Curr. Biol.">
        <title>The Mon1-Ccz1 complex is the GEF of the late endosomal Rab7 homolog Ypt7.</title>
        <authorList>
            <person name="Nordmann M."/>
            <person name="Cabrera M."/>
            <person name="Perz A."/>
            <person name="Broecker C."/>
            <person name="Ostrowicz C."/>
            <person name="Engelbrecht-Vandre S."/>
            <person name="Ungermann C."/>
        </authorList>
    </citation>
    <scope>FUNCTION</scope>
</reference>
<reference key="13">
    <citation type="journal article" date="2020" name="Elife">
        <title>A conserved and regulated mechanism drives endosomal Rab transition.</title>
        <authorList>
            <person name="Langemeyer L."/>
            <person name="Borchers A.C."/>
            <person name="Herrmann E."/>
            <person name="Fuellbrunn N."/>
            <person name="Han Y."/>
            <person name="Perz A."/>
            <person name="Auffarth K."/>
            <person name="Kuemmel D."/>
            <person name="Ungermann C."/>
        </authorList>
    </citation>
    <scope>FUNCTION</scope>
    <scope>ACTIVITY REGULATION</scope>
    <scope>PHOSPHORYLATION</scope>
    <scope>DISRUPTION PHENOTYPE</scope>
</reference>
<reference key="14">
    <citation type="journal article" date="2023" name="Proc. Natl. Acad. Sci. U.S.A.">
        <title>Regulatory sites in the Mon1-Ccz1 complex control Rab5 to Rab7 transition and endosome maturation.</title>
        <authorList>
            <person name="Borchers A.C."/>
            <person name="Janz M."/>
            <person name="Schaefer J.H."/>
            <person name="Moeller A."/>
            <person name="Kuemmel D."/>
            <person name="Paululat A."/>
            <person name="Ungermann C."/>
            <person name="Langemeyer L."/>
        </authorList>
    </citation>
    <scope>FUNCTION</scope>
    <scope>ACTIVITY REGULATION</scope>
    <scope>INTERACTION WITH YPT10</scope>
    <scope>DOMAIN</scope>
    <scope>MUTAGENESIS OF 95-LEU-LEU-96 AND TRP-406</scope>
</reference>
<organism>
    <name type="scientific">Saccharomyces cerevisiae (strain ATCC 204508 / S288c)</name>
    <name type="common">Baker's yeast</name>
    <dbReference type="NCBI Taxonomy" id="559292"/>
    <lineage>
        <taxon>Eukaryota</taxon>
        <taxon>Fungi</taxon>
        <taxon>Dikarya</taxon>
        <taxon>Ascomycota</taxon>
        <taxon>Saccharomycotina</taxon>
        <taxon>Saccharomycetes</taxon>
        <taxon>Saccharomycetales</taxon>
        <taxon>Saccharomycetaceae</taxon>
        <taxon>Saccharomyces</taxon>
    </lineage>
</organism>